<protein>
    <recommendedName>
        <fullName evidence="1">Nucleotide-binding protein DNO_0399</fullName>
    </recommendedName>
</protein>
<proteinExistence type="inferred from homology"/>
<name>Y399_DICNV</name>
<evidence type="ECO:0000255" key="1">
    <source>
        <dbReference type="HAMAP-Rule" id="MF_00636"/>
    </source>
</evidence>
<reference key="1">
    <citation type="journal article" date="2007" name="Nat. Biotechnol.">
        <title>Genome sequence and identification of candidate vaccine antigens from the animal pathogen Dichelobacter nodosus.</title>
        <authorList>
            <person name="Myers G.S.A."/>
            <person name="Parker D."/>
            <person name="Al-Hasani K."/>
            <person name="Kennan R.M."/>
            <person name="Seemann T."/>
            <person name="Ren Q."/>
            <person name="Badger J.H."/>
            <person name="Selengut J.D."/>
            <person name="Deboy R.T."/>
            <person name="Tettelin H."/>
            <person name="Boyce J.D."/>
            <person name="McCarl V.P."/>
            <person name="Han X."/>
            <person name="Nelson W.C."/>
            <person name="Madupu R."/>
            <person name="Mohamoud Y."/>
            <person name="Holley T."/>
            <person name="Fedorova N."/>
            <person name="Khouri H."/>
            <person name="Bottomley S.P."/>
            <person name="Whittington R.J."/>
            <person name="Adler B."/>
            <person name="Songer J.G."/>
            <person name="Rood J.I."/>
            <person name="Paulsen I.T."/>
        </authorList>
    </citation>
    <scope>NUCLEOTIDE SEQUENCE [LARGE SCALE GENOMIC DNA]</scope>
    <source>
        <strain>VCS1703A</strain>
    </source>
</reference>
<keyword id="KW-0067">ATP-binding</keyword>
<keyword id="KW-0342">GTP-binding</keyword>
<keyword id="KW-0547">Nucleotide-binding</keyword>
<keyword id="KW-1185">Reference proteome</keyword>
<accession>A5EVY7</accession>
<dbReference type="EMBL" id="CP000513">
    <property type="protein sequence ID" value="ABQ13740.1"/>
    <property type="molecule type" value="Genomic_DNA"/>
</dbReference>
<dbReference type="SMR" id="A5EVY7"/>
<dbReference type="STRING" id="246195.DNO_0399"/>
<dbReference type="KEGG" id="dno:DNO_0399"/>
<dbReference type="eggNOG" id="COG1660">
    <property type="taxonomic scope" value="Bacteria"/>
</dbReference>
<dbReference type="HOGENOM" id="CLU_059558_1_1_6"/>
<dbReference type="OrthoDB" id="9784461at2"/>
<dbReference type="Proteomes" id="UP000000248">
    <property type="component" value="Chromosome"/>
</dbReference>
<dbReference type="GO" id="GO:0005524">
    <property type="term" value="F:ATP binding"/>
    <property type="evidence" value="ECO:0007669"/>
    <property type="project" value="UniProtKB-UniRule"/>
</dbReference>
<dbReference type="GO" id="GO:0005525">
    <property type="term" value="F:GTP binding"/>
    <property type="evidence" value="ECO:0007669"/>
    <property type="project" value="UniProtKB-UniRule"/>
</dbReference>
<dbReference type="HAMAP" id="MF_00636">
    <property type="entry name" value="RapZ_like"/>
    <property type="match status" value="1"/>
</dbReference>
<dbReference type="InterPro" id="IPR027417">
    <property type="entry name" value="P-loop_NTPase"/>
</dbReference>
<dbReference type="InterPro" id="IPR005337">
    <property type="entry name" value="RapZ-like"/>
</dbReference>
<dbReference type="InterPro" id="IPR053930">
    <property type="entry name" value="RapZ-like_N"/>
</dbReference>
<dbReference type="InterPro" id="IPR053931">
    <property type="entry name" value="RapZ_C"/>
</dbReference>
<dbReference type="NCBIfam" id="NF003828">
    <property type="entry name" value="PRK05416.1"/>
    <property type="match status" value="1"/>
</dbReference>
<dbReference type="PANTHER" id="PTHR30448">
    <property type="entry name" value="RNASE ADAPTER PROTEIN RAPZ"/>
    <property type="match status" value="1"/>
</dbReference>
<dbReference type="PANTHER" id="PTHR30448:SF0">
    <property type="entry name" value="RNASE ADAPTER PROTEIN RAPZ"/>
    <property type="match status" value="1"/>
</dbReference>
<dbReference type="Pfam" id="PF22740">
    <property type="entry name" value="PapZ_C"/>
    <property type="match status" value="1"/>
</dbReference>
<dbReference type="Pfam" id="PF03668">
    <property type="entry name" value="RapZ-like_N"/>
    <property type="match status" value="1"/>
</dbReference>
<dbReference type="PIRSF" id="PIRSF005052">
    <property type="entry name" value="P-loopkin"/>
    <property type="match status" value="1"/>
</dbReference>
<dbReference type="SUPFAM" id="SSF52540">
    <property type="entry name" value="P-loop containing nucleoside triphosphate hydrolases"/>
    <property type="match status" value="1"/>
</dbReference>
<organism>
    <name type="scientific">Dichelobacter nodosus (strain VCS1703A)</name>
    <dbReference type="NCBI Taxonomy" id="246195"/>
    <lineage>
        <taxon>Bacteria</taxon>
        <taxon>Pseudomonadati</taxon>
        <taxon>Pseudomonadota</taxon>
        <taxon>Gammaproteobacteria</taxon>
        <taxon>Cardiobacteriales</taxon>
        <taxon>Cardiobacteriaceae</taxon>
        <taxon>Dichelobacter</taxon>
    </lineage>
</organism>
<gene>
    <name type="ordered locus">DNO_0399</name>
</gene>
<sequence length="281" mass="31964">MLIVTGMSGAGKSVALHTLEDLGYYCVDNLPLILLDAFVRDFAQHHAQPVAVAIDARNAQDISALSDKLQTMKSVTRIQILFLNAQTNVLARRFSESRRPHPLRNFGSEQIIEAIEKERKLLGSLNNIADMLIDTSNYRAADLRQQLMQLLNTTAPHLLITLQSFGFKHGIPVNADFVFDVRFLPNPYWEARLRAFNGKEQPIIDWLEQFAEPRQFAQETAHYLQHWLSYFTGQNNRAYLNIAIGCTGGQHRSVFIAESVGAILRQDFPDLHIEHRDIEKN</sequence>
<comment type="function">
    <text evidence="1">Displays ATPase and GTPase activities.</text>
</comment>
<comment type="similarity">
    <text evidence="1">Belongs to the RapZ-like family.</text>
</comment>
<feature type="chain" id="PRO_0000383240" description="Nucleotide-binding protein DNO_0399">
    <location>
        <begin position="1"/>
        <end position="281"/>
    </location>
</feature>
<feature type="binding site" evidence="1">
    <location>
        <begin position="6"/>
        <end position="13"/>
    </location>
    <ligand>
        <name>ATP</name>
        <dbReference type="ChEBI" id="CHEBI:30616"/>
    </ligand>
</feature>
<feature type="binding site" evidence="1">
    <location>
        <begin position="55"/>
        <end position="58"/>
    </location>
    <ligand>
        <name>GTP</name>
        <dbReference type="ChEBI" id="CHEBI:37565"/>
    </ligand>
</feature>